<sequence>MFDLEYQLKNLPDKPGVYLMKNNLGEIIYVGKAKILKNRVRQYFQKSQKHSEKVKAMVKNIEEFEYIITDSEIEALILECNLIKKYRPKYNILLKDDKHYPFIKVTLAEDFPRVISTRKVTKDGSKYFGPYVDGSSVKDIIELIKKTFPIRTCKKNIVEEAKAIRPCLNYQIGLCKAPCAQYIKKSEYRETIDDVIKLLSGKHLDIVENFKLNMEKAAENLEFEKAAMLRDKINIIEKIGEKQKIILNNFDNEDYISLYSDGKDTCFQVFFLRNGKIVGREHFIIEDTFDTNSSTLISNFLKEFYGGTAYIPKTIYVPNIEDEALLEQWLTLKKESKSTIKIPIKGEKKNILVLVEKNAKTTLENFKLKYLQEKALYDNVLKDLKNILRLQEEPIRIEAFDISNIQGFDSVGSMVVFEKGRAKPSDYRRFKINTVKGADDYKSMKEILTRRFQHGLSEIKSIQDRKLEFSSGKFSVFPDLILMDGGKGQINIALEVLNAFNIDIPVCGMVKDNKHRTRGLIYNGEEIIINKYGSVMKFITRVQDEVHRFAISYHRSLRGKNSFHSLLDDIPNIGEKRKKDLLFNFKSIDNIKKATYEELLSIPSMDKKSAECVLEFFK</sequence>
<organism>
    <name type="scientific">Clostridium botulinum (strain ATCC 19397 / Type A)</name>
    <dbReference type="NCBI Taxonomy" id="441770"/>
    <lineage>
        <taxon>Bacteria</taxon>
        <taxon>Bacillati</taxon>
        <taxon>Bacillota</taxon>
        <taxon>Clostridia</taxon>
        <taxon>Eubacteriales</taxon>
        <taxon>Clostridiaceae</taxon>
        <taxon>Clostridium</taxon>
    </lineage>
</organism>
<dbReference type="EMBL" id="CP000726">
    <property type="protein sequence ID" value="ABS33474.1"/>
    <property type="molecule type" value="Genomic_DNA"/>
</dbReference>
<dbReference type="RefSeq" id="WP_012048309.1">
    <property type="nucleotide sequence ID" value="NC_009697.1"/>
</dbReference>
<dbReference type="SMR" id="A7FYX4"/>
<dbReference type="GeneID" id="5186190"/>
<dbReference type="KEGG" id="cba:CLB_3436"/>
<dbReference type="HOGENOM" id="CLU_014841_3_2_9"/>
<dbReference type="GO" id="GO:0005737">
    <property type="term" value="C:cytoplasm"/>
    <property type="evidence" value="ECO:0007669"/>
    <property type="project" value="UniProtKB-SubCell"/>
</dbReference>
<dbReference type="GO" id="GO:0009380">
    <property type="term" value="C:excinuclease repair complex"/>
    <property type="evidence" value="ECO:0007669"/>
    <property type="project" value="InterPro"/>
</dbReference>
<dbReference type="GO" id="GO:0003677">
    <property type="term" value="F:DNA binding"/>
    <property type="evidence" value="ECO:0007669"/>
    <property type="project" value="UniProtKB-UniRule"/>
</dbReference>
<dbReference type="GO" id="GO:0009381">
    <property type="term" value="F:excinuclease ABC activity"/>
    <property type="evidence" value="ECO:0007669"/>
    <property type="project" value="UniProtKB-UniRule"/>
</dbReference>
<dbReference type="GO" id="GO:0006289">
    <property type="term" value="P:nucleotide-excision repair"/>
    <property type="evidence" value="ECO:0007669"/>
    <property type="project" value="UniProtKB-UniRule"/>
</dbReference>
<dbReference type="GO" id="GO:0009432">
    <property type="term" value="P:SOS response"/>
    <property type="evidence" value="ECO:0007669"/>
    <property type="project" value="UniProtKB-UniRule"/>
</dbReference>
<dbReference type="CDD" id="cd10434">
    <property type="entry name" value="GIY-YIG_UvrC_Cho"/>
    <property type="match status" value="1"/>
</dbReference>
<dbReference type="FunFam" id="3.40.1440.10:FF:000001">
    <property type="entry name" value="UvrABC system protein C"/>
    <property type="match status" value="1"/>
</dbReference>
<dbReference type="Gene3D" id="1.10.150.20">
    <property type="entry name" value="5' to 3' exonuclease, C-terminal subdomain"/>
    <property type="match status" value="1"/>
</dbReference>
<dbReference type="Gene3D" id="3.40.1440.10">
    <property type="entry name" value="GIY-YIG endonuclease"/>
    <property type="match status" value="1"/>
</dbReference>
<dbReference type="Gene3D" id="4.10.860.10">
    <property type="entry name" value="UVR domain"/>
    <property type="match status" value="1"/>
</dbReference>
<dbReference type="Gene3D" id="3.30.420.340">
    <property type="entry name" value="UvrC, RNAse H endonuclease domain"/>
    <property type="match status" value="1"/>
</dbReference>
<dbReference type="HAMAP" id="MF_00203">
    <property type="entry name" value="UvrC"/>
    <property type="match status" value="1"/>
</dbReference>
<dbReference type="InterPro" id="IPR041663">
    <property type="entry name" value="DisA/LigA_HHH"/>
</dbReference>
<dbReference type="InterPro" id="IPR000305">
    <property type="entry name" value="GIY-YIG_endonuc"/>
</dbReference>
<dbReference type="InterPro" id="IPR035901">
    <property type="entry name" value="GIY-YIG_endonuc_sf"/>
</dbReference>
<dbReference type="InterPro" id="IPR047296">
    <property type="entry name" value="GIY-YIG_UvrC_Cho"/>
</dbReference>
<dbReference type="InterPro" id="IPR010994">
    <property type="entry name" value="RuvA_2-like"/>
</dbReference>
<dbReference type="InterPro" id="IPR001943">
    <property type="entry name" value="UVR_dom"/>
</dbReference>
<dbReference type="InterPro" id="IPR036876">
    <property type="entry name" value="UVR_dom_sf"/>
</dbReference>
<dbReference type="InterPro" id="IPR050066">
    <property type="entry name" value="UvrABC_protein_C"/>
</dbReference>
<dbReference type="InterPro" id="IPR004791">
    <property type="entry name" value="UvrC"/>
</dbReference>
<dbReference type="InterPro" id="IPR001162">
    <property type="entry name" value="UvrC_RNase_H_dom"/>
</dbReference>
<dbReference type="InterPro" id="IPR038476">
    <property type="entry name" value="UvrC_RNase_H_dom_sf"/>
</dbReference>
<dbReference type="NCBIfam" id="NF001824">
    <property type="entry name" value="PRK00558.1-5"/>
    <property type="match status" value="1"/>
</dbReference>
<dbReference type="NCBIfam" id="TIGR00194">
    <property type="entry name" value="uvrC"/>
    <property type="match status" value="1"/>
</dbReference>
<dbReference type="PANTHER" id="PTHR30562:SF1">
    <property type="entry name" value="UVRABC SYSTEM PROTEIN C"/>
    <property type="match status" value="1"/>
</dbReference>
<dbReference type="PANTHER" id="PTHR30562">
    <property type="entry name" value="UVRC/OXIDOREDUCTASE"/>
    <property type="match status" value="1"/>
</dbReference>
<dbReference type="Pfam" id="PF01541">
    <property type="entry name" value="GIY-YIG"/>
    <property type="match status" value="1"/>
</dbReference>
<dbReference type="Pfam" id="PF12826">
    <property type="entry name" value="HHH_2"/>
    <property type="match status" value="1"/>
</dbReference>
<dbReference type="Pfam" id="PF02151">
    <property type="entry name" value="UVR"/>
    <property type="match status" value="1"/>
</dbReference>
<dbReference type="Pfam" id="PF22920">
    <property type="entry name" value="UvrC_RNaseH"/>
    <property type="match status" value="1"/>
</dbReference>
<dbReference type="Pfam" id="PF08459">
    <property type="entry name" value="UvrC_RNaseH_dom"/>
    <property type="match status" value="1"/>
</dbReference>
<dbReference type="SMART" id="SM00465">
    <property type="entry name" value="GIYc"/>
    <property type="match status" value="1"/>
</dbReference>
<dbReference type="SUPFAM" id="SSF46600">
    <property type="entry name" value="C-terminal UvrC-binding domain of UvrB"/>
    <property type="match status" value="1"/>
</dbReference>
<dbReference type="SUPFAM" id="SSF82771">
    <property type="entry name" value="GIY-YIG endonuclease"/>
    <property type="match status" value="1"/>
</dbReference>
<dbReference type="SUPFAM" id="SSF47781">
    <property type="entry name" value="RuvA domain 2-like"/>
    <property type="match status" value="1"/>
</dbReference>
<dbReference type="PROSITE" id="PS50164">
    <property type="entry name" value="GIY_YIG"/>
    <property type="match status" value="1"/>
</dbReference>
<dbReference type="PROSITE" id="PS50151">
    <property type="entry name" value="UVR"/>
    <property type="match status" value="1"/>
</dbReference>
<dbReference type="PROSITE" id="PS50165">
    <property type="entry name" value="UVRC"/>
    <property type="match status" value="1"/>
</dbReference>
<reference key="1">
    <citation type="journal article" date="2007" name="PLoS ONE">
        <title>Analysis of the neurotoxin complex genes in Clostridium botulinum A1-A4 and B1 strains: BoNT/A3, /Ba4 and /B1 clusters are located within plasmids.</title>
        <authorList>
            <person name="Smith T.J."/>
            <person name="Hill K.K."/>
            <person name="Foley B.T."/>
            <person name="Detter J.C."/>
            <person name="Munk A.C."/>
            <person name="Bruce D.C."/>
            <person name="Doggett N.A."/>
            <person name="Smith L.A."/>
            <person name="Marks J.D."/>
            <person name="Xie G."/>
            <person name="Brettin T.S."/>
        </authorList>
    </citation>
    <scope>NUCLEOTIDE SEQUENCE [LARGE SCALE GENOMIC DNA]</scope>
    <source>
        <strain>ATCC 19397 / Type A</strain>
    </source>
</reference>
<protein>
    <recommendedName>
        <fullName evidence="1">UvrABC system protein C</fullName>
        <shortName evidence="1">Protein UvrC</shortName>
    </recommendedName>
    <alternativeName>
        <fullName evidence="1">Excinuclease ABC subunit C</fullName>
    </alternativeName>
</protein>
<gene>
    <name evidence="1" type="primary">uvrC</name>
    <name type="ordered locus">CLB_3436</name>
</gene>
<evidence type="ECO:0000255" key="1">
    <source>
        <dbReference type="HAMAP-Rule" id="MF_00203"/>
    </source>
</evidence>
<proteinExistence type="inferred from homology"/>
<feature type="chain" id="PRO_1000099468" description="UvrABC system protein C">
    <location>
        <begin position="1"/>
        <end position="618"/>
    </location>
</feature>
<feature type="domain" description="GIY-YIG" evidence="1">
    <location>
        <begin position="13"/>
        <end position="92"/>
    </location>
</feature>
<feature type="domain" description="UVR" evidence="1">
    <location>
        <begin position="204"/>
        <end position="239"/>
    </location>
</feature>
<keyword id="KW-0963">Cytoplasm</keyword>
<keyword id="KW-0227">DNA damage</keyword>
<keyword id="KW-0228">DNA excision</keyword>
<keyword id="KW-0234">DNA repair</keyword>
<keyword id="KW-0267">Excision nuclease</keyword>
<keyword id="KW-0742">SOS response</keyword>
<accession>A7FYX4</accession>
<name>UVRC_CLOB1</name>
<comment type="function">
    <text evidence="1">The UvrABC repair system catalyzes the recognition and processing of DNA lesions. UvrC both incises the 5' and 3' sides of the lesion. The N-terminal half is responsible for the 3' incision and the C-terminal half is responsible for the 5' incision.</text>
</comment>
<comment type="subunit">
    <text evidence="1">Interacts with UvrB in an incision complex.</text>
</comment>
<comment type="subcellular location">
    <subcellularLocation>
        <location evidence="1">Cytoplasm</location>
    </subcellularLocation>
</comment>
<comment type="similarity">
    <text evidence="1">Belongs to the UvrC family.</text>
</comment>